<protein>
    <recommendedName>
        <fullName>Putative ABC transporter ATP-binding protein</fullName>
    </recommendedName>
</protein>
<accession>P72477</accession>
<accession>O06943</accession>
<name>ABCX_STRMU</name>
<keyword id="KW-0067">ATP-binding</keyword>
<keyword id="KW-0547">Nucleotide-binding</keyword>
<keyword id="KW-1185">Reference proteome</keyword>
<keyword id="KW-0813">Transport</keyword>
<organism>
    <name type="scientific">Streptococcus mutans serotype c (strain ATCC 700610 / UA159)</name>
    <dbReference type="NCBI Taxonomy" id="210007"/>
    <lineage>
        <taxon>Bacteria</taxon>
        <taxon>Bacillati</taxon>
        <taxon>Bacillota</taxon>
        <taxon>Bacilli</taxon>
        <taxon>Lactobacillales</taxon>
        <taxon>Streptococcaceae</taxon>
        <taxon>Streptococcus</taxon>
    </lineage>
</organism>
<feature type="chain" id="PRO_0000091921" description="Putative ABC transporter ATP-binding protein">
    <location>
        <begin position="1"/>
        <end position="260"/>
    </location>
</feature>
<feature type="domain" description="ABC transporter" evidence="1">
    <location>
        <begin position="4"/>
        <end position="243"/>
    </location>
</feature>
<feature type="binding site" evidence="1">
    <location>
        <begin position="36"/>
        <end position="43"/>
    </location>
    <ligand>
        <name>ATP</name>
        <dbReference type="ChEBI" id="CHEBI:30616"/>
    </ligand>
</feature>
<feature type="sequence conflict" description="In Ref. 4; AAB41193." evidence="2" ref="4">
    <original>D</original>
    <variation>G</variation>
    <location>
        <position position="115"/>
    </location>
</feature>
<feature type="sequence conflict" description="In Ref. 4; AAB41193." evidence="2" ref="4">
    <original>T</original>
    <variation>S</variation>
    <location>
        <position position="127"/>
    </location>
</feature>
<dbReference type="EMBL" id="U94990">
    <property type="protein sequence ID" value="AAC04616.1"/>
    <property type="molecule type" value="Genomic_DNA"/>
</dbReference>
<dbReference type="EMBL" id="AF051356">
    <property type="protein sequence ID" value="AAC05770.1"/>
    <property type="molecule type" value="Genomic_DNA"/>
</dbReference>
<dbReference type="EMBL" id="AE014133">
    <property type="protein sequence ID" value="AAN59332.1"/>
    <property type="molecule type" value="Genomic_DNA"/>
</dbReference>
<dbReference type="EMBL" id="U75475">
    <property type="protein sequence ID" value="AAB41193.1"/>
    <property type="molecule type" value="Genomic_DNA"/>
</dbReference>
<dbReference type="RefSeq" id="NP_722026.1">
    <property type="nucleotide sequence ID" value="NC_004350.2"/>
</dbReference>
<dbReference type="RefSeq" id="WP_002262577.1">
    <property type="nucleotide sequence ID" value="NC_004350.2"/>
</dbReference>
<dbReference type="SMR" id="P72477"/>
<dbReference type="STRING" id="210007.SMU_1695"/>
<dbReference type="KEGG" id="smu:SMU_1695"/>
<dbReference type="PATRIC" id="fig|210007.7.peg.1515"/>
<dbReference type="eggNOG" id="COG1119">
    <property type="taxonomic scope" value="Bacteria"/>
</dbReference>
<dbReference type="HOGENOM" id="CLU_000604_1_11_9"/>
<dbReference type="OrthoDB" id="9789994at2"/>
<dbReference type="PhylomeDB" id="P72477"/>
<dbReference type="Proteomes" id="UP000002512">
    <property type="component" value="Chromosome"/>
</dbReference>
<dbReference type="GO" id="GO:0005524">
    <property type="term" value="F:ATP binding"/>
    <property type="evidence" value="ECO:0007669"/>
    <property type="project" value="UniProtKB-KW"/>
</dbReference>
<dbReference type="GO" id="GO:0016887">
    <property type="term" value="F:ATP hydrolysis activity"/>
    <property type="evidence" value="ECO:0007669"/>
    <property type="project" value="InterPro"/>
</dbReference>
<dbReference type="CDD" id="cd00267">
    <property type="entry name" value="ABC_ATPase"/>
    <property type="match status" value="1"/>
</dbReference>
<dbReference type="Gene3D" id="3.40.50.300">
    <property type="entry name" value="P-loop containing nucleotide triphosphate hydrolases"/>
    <property type="match status" value="1"/>
</dbReference>
<dbReference type="InterPro" id="IPR003593">
    <property type="entry name" value="AAA+_ATPase"/>
</dbReference>
<dbReference type="InterPro" id="IPR003439">
    <property type="entry name" value="ABC_transporter-like_ATP-bd"/>
</dbReference>
<dbReference type="InterPro" id="IPR017871">
    <property type="entry name" value="ABC_transporter-like_CS"/>
</dbReference>
<dbReference type="InterPro" id="IPR050153">
    <property type="entry name" value="Metal_Ion_Import_ABC"/>
</dbReference>
<dbReference type="InterPro" id="IPR027417">
    <property type="entry name" value="P-loop_NTPase"/>
</dbReference>
<dbReference type="PANTHER" id="PTHR42734">
    <property type="entry name" value="METAL TRANSPORT SYSTEM ATP-BINDING PROTEIN TM_0124-RELATED"/>
    <property type="match status" value="1"/>
</dbReference>
<dbReference type="Pfam" id="PF00005">
    <property type="entry name" value="ABC_tran"/>
    <property type="match status" value="1"/>
</dbReference>
<dbReference type="SMART" id="SM00382">
    <property type="entry name" value="AAA"/>
    <property type="match status" value="1"/>
</dbReference>
<dbReference type="SUPFAM" id="SSF52540">
    <property type="entry name" value="P-loop containing nucleoside triphosphate hydrolases"/>
    <property type="match status" value="1"/>
</dbReference>
<dbReference type="PROSITE" id="PS00211">
    <property type="entry name" value="ABC_TRANSPORTER_1"/>
    <property type="match status" value="1"/>
</dbReference>
<dbReference type="PROSITE" id="PS50893">
    <property type="entry name" value="ABC_TRANSPORTER_2"/>
    <property type="match status" value="1"/>
</dbReference>
<gene>
    <name type="primary">abcX</name>
    <name type="ordered locus">SMU_1695</name>
</gene>
<reference key="1">
    <citation type="submission" date="1997-03" db="EMBL/GenBank/DDBJ databases">
        <authorList>
            <person name="Boyd D.A."/>
            <person name="Hamilton I.R."/>
        </authorList>
    </citation>
    <scope>NUCLEOTIDE SEQUENCE [GENOMIC DNA]</scope>
    <source>
        <strain>LT11</strain>
    </source>
</reference>
<reference key="2">
    <citation type="journal article" date="2000" name="J. Bacteriol.">
        <title>Defects in D-alanyl-lipoteichoic acid synthesis in Streptococcus mutans results in acid sensitivity.</title>
        <authorList>
            <person name="Boyd D.A."/>
            <person name="Cvitkovitch D.G."/>
            <person name="Bleiweis A.S."/>
            <person name="Kiriukhin M.Y."/>
            <person name="Debabov D.V."/>
            <person name="Neuhaus F.C."/>
            <person name="Hamilton I.R."/>
        </authorList>
    </citation>
    <scope>NUCLEOTIDE SEQUENCE [GENOMIC DNA]</scope>
    <source>
        <strain>LT11</strain>
    </source>
</reference>
<reference key="3">
    <citation type="journal article" date="2002" name="Proc. Natl. Acad. Sci. U.S.A.">
        <title>Genome sequence of Streptococcus mutans UA159, a cariogenic dental pathogen.</title>
        <authorList>
            <person name="Ajdic D.J."/>
            <person name="McShan W.M."/>
            <person name="McLaughlin R.E."/>
            <person name="Savic G."/>
            <person name="Chang J."/>
            <person name="Carson M.B."/>
            <person name="Primeaux C."/>
            <person name="Tian R."/>
            <person name="Kenton S."/>
            <person name="Jia H.G."/>
            <person name="Lin S.P."/>
            <person name="Qian Y."/>
            <person name="Li S."/>
            <person name="Zhu H."/>
            <person name="Najar F.Z."/>
            <person name="Lai H."/>
            <person name="White J."/>
            <person name="Roe B.A."/>
            <person name="Ferretti J.J."/>
        </authorList>
    </citation>
    <scope>NUCLEOTIDE SEQUENCE [LARGE SCALE GENOMIC DNA]</scope>
    <source>
        <strain>ATCC 700610 / UA159</strain>
    </source>
</reference>
<reference key="4">
    <citation type="submission" date="1996-10" db="EMBL/GenBank/DDBJ databases">
        <authorList>
            <person name="Peruzzi F."/>
            <person name="Piggot P.J."/>
            <person name="Daneo-Moore L."/>
        </authorList>
    </citation>
    <scope>NUCLEOTIDE SEQUENCE [GENOMIC DNA] OF 100-158</scope>
    <source>
        <strain>GS-5</strain>
    </source>
</reference>
<comment type="similarity">
    <text evidence="2">Belongs to the ABC transporter superfamily.</text>
</comment>
<proteinExistence type="inferred from homology"/>
<evidence type="ECO:0000255" key="1">
    <source>
        <dbReference type="PROSITE-ProRule" id="PRU00434"/>
    </source>
</evidence>
<evidence type="ECO:0000305" key="2"/>
<sequence length="260" mass="29366">MALISMKNVTLKKQGKILLNNLNWKVKKGENWVILGLNGSGKTTLLKLIMAEYWSTQGQVEILNTRFGQGDIPNMRTKIGVVGSFIAERLPANMLAEKIVLTGKYKSSILYKEYDETELNEARQMLTVIGGKHLLGRIYSSLSQGEKQLLLIARSLMEDPEIIILDEATSGLDLFAREKLLTQVEKITELPHAPTILYVTHHAEEITDKMSHILLLRRGKIVAQGPKKDIITPQVLENFYESPVNIISIDDKRFFIKPQV</sequence>